<accession>Q81IQ1</accession>
<feature type="chain" id="PRO_0000148195" description="Phosphoribosylformylglycinamidine cyclo-ligase">
    <location>
        <begin position="1"/>
        <end position="346"/>
    </location>
</feature>
<organism>
    <name type="scientific">Bacillus cereus (strain ATCC 14579 / DSM 31 / CCUG 7414 / JCM 2152 / NBRC 15305 / NCIMB 9373 / NCTC 2599 / NRRL B-3711)</name>
    <dbReference type="NCBI Taxonomy" id="226900"/>
    <lineage>
        <taxon>Bacteria</taxon>
        <taxon>Bacillati</taxon>
        <taxon>Bacillota</taxon>
        <taxon>Bacilli</taxon>
        <taxon>Bacillales</taxon>
        <taxon>Bacillaceae</taxon>
        <taxon>Bacillus</taxon>
        <taxon>Bacillus cereus group</taxon>
    </lineage>
</organism>
<dbReference type="EC" id="6.3.3.1" evidence="1"/>
<dbReference type="EMBL" id="AE016877">
    <property type="protein sequence ID" value="AAP07371.1"/>
    <property type="molecule type" value="Genomic_DNA"/>
</dbReference>
<dbReference type="RefSeq" id="NP_830170.1">
    <property type="nucleotide sequence ID" value="NC_004722.1"/>
</dbReference>
<dbReference type="RefSeq" id="WP_001262439.1">
    <property type="nucleotide sequence ID" value="NZ_CP138336.1"/>
</dbReference>
<dbReference type="SMR" id="Q81IQ1"/>
<dbReference type="STRING" id="226900.BC_0331"/>
<dbReference type="KEGG" id="bce:BC0331"/>
<dbReference type="PATRIC" id="fig|226900.8.peg.303"/>
<dbReference type="HOGENOM" id="CLU_047116_0_0_9"/>
<dbReference type="OrthoDB" id="9802507at2"/>
<dbReference type="UniPathway" id="UPA00074">
    <property type="reaction ID" value="UER00129"/>
</dbReference>
<dbReference type="Proteomes" id="UP000001417">
    <property type="component" value="Chromosome"/>
</dbReference>
<dbReference type="GO" id="GO:0005829">
    <property type="term" value="C:cytosol"/>
    <property type="evidence" value="ECO:0000318"/>
    <property type="project" value="GO_Central"/>
</dbReference>
<dbReference type="GO" id="GO:0005524">
    <property type="term" value="F:ATP binding"/>
    <property type="evidence" value="ECO:0007669"/>
    <property type="project" value="UniProtKB-KW"/>
</dbReference>
<dbReference type="GO" id="GO:0004637">
    <property type="term" value="F:phosphoribosylamine-glycine ligase activity"/>
    <property type="evidence" value="ECO:0000318"/>
    <property type="project" value="GO_Central"/>
</dbReference>
<dbReference type="GO" id="GO:0004641">
    <property type="term" value="F:phosphoribosylformylglycinamidine cyclo-ligase activity"/>
    <property type="evidence" value="ECO:0000318"/>
    <property type="project" value="GO_Central"/>
</dbReference>
<dbReference type="GO" id="GO:0006189">
    <property type="term" value="P:'de novo' IMP biosynthetic process"/>
    <property type="evidence" value="ECO:0007669"/>
    <property type="project" value="UniProtKB-UniRule"/>
</dbReference>
<dbReference type="GO" id="GO:0046084">
    <property type="term" value="P:adenine biosynthetic process"/>
    <property type="evidence" value="ECO:0000318"/>
    <property type="project" value="GO_Central"/>
</dbReference>
<dbReference type="GO" id="GO:0006164">
    <property type="term" value="P:purine nucleotide biosynthetic process"/>
    <property type="evidence" value="ECO:0000318"/>
    <property type="project" value="GO_Central"/>
</dbReference>
<dbReference type="CDD" id="cd02196">
    <property type="entry name" value="PurM"/>
    <property type="match status" value="1"/>
</dbReference>
<dbReference type="FunFam" id="3.30.1330.10:FF:000001">
    <property type="entry name" value="Phosphoribosylformylglycinamidine cyclo-ligase"/>
    <property type="match status" value="1"/>
</dbReference>
<dbReference type="FunFam" id="3.90.650.10:FF:000001">
    <property type="entry name" value="Phosphoribosylformylglycinamidine cyclo-ligase"/>
    <property type="match status" value="1"/>
</dbReference>
<dbReference type="Gene3D" id="3.90.650.10">
    <property type="entry name" value="PurM-like C-terminal domain"/>
    <property type="match status" value="1"/>
</dbReference>
<dbReference type="Gene3D" id="3.30.1330.10">
    <property type="entry name" value="PurM-like, N-terminal domain"/>
    <property type="match status" value="1"/>
</dbReference>
<dbReference type="HAMAP" id="MF_00741">
    <property type="entry name" value="AIRS"/>
    <property type="match status" value="1"/>
</dbReference>
<dbReference type="InterPro" id="IPR010918">
    <property type="entry name" value="PurM-like_C_dom"/>
</dbReference>
<dbReference type="InterPro" id="IPR036676">
    <property type="entry name" value="PurM-like_C_sf"/>
</dbReference>
<dbReference type="InterPro" id="IPR016188">
    <property type="entry name" value="PurM-like_N"/>
</dbReference>
<dbReference type="InterPro" id="IPR036921">
    <property type="entry name" value="PurM-like_N_sf"/>
</dbReference>
<dbReference type="InterPro" id="IPR004733">
    <property type="entry name" value="PurM_cligase"/>
</dbReference>
<dbReference type="NCBIfam" id="TIGR00878">
    <property type="entry name" value="purM"/>
    <property type="match status" value="1"/>
</dbReference>
<dbReference type="PANTHER" id="PTHR10520:SF12">
    <property type="entry name" value="TRIFUNCTIONAL PURINE BIOSYNTHETIC PROTEIN ADENOSINE-3"/>
    <property type="match status" value="1"/>
</dbReference>
<dbReference type="PANTHER" id="PTHR10520">
    <property type="entry name" value="TRIFUNCTIONAL PURINE BIOSYNTHETIC PROTEIN ADENOSINE-3-RELATED"/>
    <property type="match status" value="1"/>
</dbReference>
<dbReference type="Pfam" id="PF00586">
    <property type="entry name" value="AIRS"/>
    <property type="match status" value="1"/>
</dbReference>
<dbReference type="Pfam" id="PF02769">
    <property type="entry name" value="AIRS_C"/>
    <property type="match status" value="1"/>
</dbReference>
<dbReference type="SUPFAM" id="SSF56042">
    <property type="entry name" value="PurM C-terminal domain-like"/>
    <property type="match status" value="1"/>
</dbReference>
<dbReference type="SUPFAM" id="SSF55326">
    <property type="entry name" value="PurM N-terminal domain-like"/>
    <property type="match status" value="1"/>
</dbReference>
<sequence>MANAYKQAGVDIEAGYEAVSRMKKHVQTTMRKEVLGGLGGFGGMFDLSKFALEEPVLVSGTDGVGTKLMLAFMADKHDTIGIDAVAMCVNDIVVQGAEPLFFLDYIACGKAEPSKIENIVKGISEGCRQAGCALIGGETAEMPGMYSTEEYDLAGFTVGIVDKKKIVTGEKIEAGHVLIGLASSGIHSNGYSLVRKVLLEDGELSLERIYGRLELPLGEELLKPTKIYVKPILELLKKHEVYGMAHITGGGFIENIPRMLPEGIGAEIELGSWEIQPIFSLLQEVGKLEEKEMFNIFNMGIGMVVAVKEEDAKDVVRLLEEQGEMARIIGRTIQGAGVTFNGGTAL</sequence>
<name>PUR5_BACCR</name>
<protein>
    <recommendedName>
        <fullName evidence="1">Phosphoribosylformylglycinamidine cyclo-ligase</fullName>
        <ecNumber evidence="1">6.3.3.1</ecNumber>
    </recommendedName>
    <alternativeName>
        <fullName evidence="1">AIR synthase</fullName>
    </alternativeName>
    <alternativeName>
        <fullName evidence="1">AIRS</fullName>
    </alternativeName>
    <alternativeName>
        <fullName evidence="1">Phosphoribosyl-aminoimidazole synthetase</fullName>
    </alternativeName>
</protein>
<keyword id="KW-0067">ATP-binding</keyword>
<keyword id="KW-0963">Cytoplasm</keyword>
<keyword id="KW-0436">Ligase</keyword>
<keyword id="KW-0547">Nucleotide-binding</keyword>
<keyword id="KW-0658">Purine biosynthesis</keyword>
<keyword id="KW-1185">Reference proteome</keyword>
<evidence type="ECO:0000255" key="1">
    <source>
        <dbReference type="HAMAP-Rule" id="MF_00741"/>
    </source>
</evidence>
<proteinExistence type="inferred from homology"/>
<reference key="1">
    <citation type="journal article" date="2003" name="Nature">
        <title>Genome sequence of Bacillus cereus and comparative analysis with Bacillus anthracis.</title>
        <authorList>
            <person name="Ivanova N."/>
            <person name="Sorokin A."/>
            <person name="Anderson I."/>
            <person name="Galleron N."/>
            <person name="Candelon B."/>
            <person name="Kapatral V."/>
            <person name="Bhattacharyya A."/>
            <person name="Reznik G."/>
            <person name="Mikhailova N."/>
            <person name="Lapidus A."/>
            <person name="Chu L."/>
            <person name="Mazur M."/>
            <person name="Goltsman E."/>
            <person name="Larsen N."/>
            <person name="D'Souza M."/>
            <person name="Walunas T."/>
            <person name="Grechkin Y."/>
            <person name="Pusch G."/>
            <person name="Haselkorn R."/>
            <person name="Fonstein M."/>
            <person name="Ehrlich S.D."/>
            <person name="Overbeek R."/>
            <person name="Kyrpides N.C."/>
        </authorList>
    </citation>
    <scope>NUCLEOTIDE SEQUENCE [LARGE SCALE GENOMIC DNA]</scope>
    <source>
        <strain>ATCC 14579 / DSM 31 / CCUG 7414 / JCM 2152 / NBRC 15305 / NCIMB 9373 / NCTC 2599 / NRRL B-3711</strain>
    </source>
</reference>
<gene>
    <name evidence="1" type="primary">purM</name>
    <name type="ordered locus">BC_0331</name>
</gene>
<comment type="catalytic activity">
    <reaction evidence="1">
        <text>2-formamido-N(1)-(5-O-phospho-beta-D-ribosyl)acetamidine + ATP = 5-amino-1-(5-phospho-beta-D-ribosyl)imidazole + ADP + phosphate + H(+)</text>
        <dbReference type="Rhea" id="RHEA:23032"/>
        <dbReference type="ChEBI" id="CHEBI:15378"/>
        <dbReference type="ChEBI" id="CHEBI:30616"/>
        <dbReference type="ChEBI" id="CHEBI:43474"/>
        <dbReference type="ChEBI" id="CHEBI:137981"/>
        <dbReference type="ChEBI" id="CHEBI:147287"/>
        <dbReference type="ChEBI" id="CHEBI:456216"/>
        <dbReference type="EC" id="6.3.3.1"/>
    </reaction>
</comment>
<comment type="pathway">
    <text evidence="1">Purine metabolism; IMP biosynthesis via de novo pathway; 5-amino-1-(5-phospho-D-ribosyl)imidazole from N(2)-formyl-N(1)-(5-phospho-D-ribosyl)glycinamide: step 2/2.</text>
</comment>
<comment type="subcellular location">
    <subcellularLocation>
        <location evidence="1">Cytoplasm</location>
    </subcellularLocation>
</comment>
<comment type="similarity">
    <text evidence="1">Belongs to the AIR synthase family.</text>
</comment>